<feature type="chain" id="PRO_0000379821" description="Putative hydro-lyase BRADO2538">
    <location>
        <begin position="1"/>
        <end position="272"/>
    </location>
</feature>
<proteinExistence type="inferred from homology"/>
<protein>
    <recommendedName>
        <fullName evidence="1">Putative hydro-lyase BRADO2538</fullName>
        <ecNumber evidence="1">4.2.1.-</ecNumber>
    </recommendedName>
</protein>
<name>Y2538_BRASO</name>
<accession>A4YR32</accession>
<sequence length="272" mass="29409">MTVSAALQQSADEAGLLPSHQARLDYRTGKGWSTAGVANGFVQGNLAIIPERYAGAFHRFCQLNPKPCPIIGMSDPGNPHIPALGADLDIRTDVPRYRVWRDGEMVEEPTDLLAHWRDDLVTFVLGCSFSFEEALMADGLPIRHIEQGCRVPMYRTNIACTPSGQFAGPMVVSMRPFKPAQAIRAVQITTRFPAVHGAPVHLGLPEQIGIADINTPDYGDPVPVGTDEIPVFWACGVTPQAVIAAAKLPFAITHAPGLMLITDLRNKDLAVL</sequence>
<evidence type="ECO:0000255" key="1">
    <source>
        <dbReference type="HAMAP-Rule" id="MF_01830"/>
    </source>
</evidence>
<evidence type="ECO:0000305" key="2"/>
<comment type="similarity">
    <text evidence="1">Belongs to the D-glutamate cyclase family.</text>
</comment>
<comment type="sequence caution" evidence="2">
    <conflict type="erroneous initiation">
        <sequence resource="EMBL-CDS" id="CAL76358"/>
    </conflict>
</comment>
<gene>
    <name type="ordered locus">BRADO2538</name>
</gene>
<keyword id="KW-0456">Lyase</keyword>
<keyword id="KW-1185">Reference proteome</keyword>
<dbReference type="EC" id="4.2.1.-" evidence="1"/>
<dbReference type="EMBL" id="CU234118">
    <property type="protein sequence ID" value="CAL76358.1"/>
    <property type="status" value="ALT_INIT"/>
    <property type="molecule type" value="Genomic_DNA"/>
</dbReference>
<dbReference type="RefSeq" id="WP_041756406.1">
    <property type="nucleotide sequence ID" value="NC_009445.1"/>
</dbReference>
<dbReference type="SMR" id="A4YR32"/>
<dbReference type="STRING" id="114615.BRADO2538"/>
<dbReference type="KEGG" id="bra:BRADO2538"/>
<dbReference type="eggNOG" id="COG4336">
    <property type="taxonomic scope" value="Bacteria"/>
</dbReference>
<dbReference type="HOGENOM" id="CLU_059759_0_0_5"/>
<dbReference type="OrthoDB" id="149585at2"/>
<dbReference type="Proteomes" id="UP000001994">
    <property type="component" value="Chromosome"/>
</dbReference>
<dbReference type="GO" id="GO:0016829">
    <property type="term" value="F:lyase activity"/>
    <property type="evidence" value="ECO:0007669"/>
    <property type="project" value="UniProtKB-KW"/>
</dbReference>
<dbReference type="FunFam" id="3.30.2040.10:FF:000001">
    <property type="entry name" value="D-glutamate cyclase, mitochondrial"/>
    <property type="match status" value="1"/>
</dbReference>
<dbReference type="Gene3D" id="3.40.1640.10">
    <property type="entry name" value="PSTPO5379-like"/>
    <property type="match status" value="1"/>
</dbReference>
<dbReference type="Gene3D" id="3.30.2040.10">
    <property type="entry name" value="PSTPO5379-like domain"/>
    <property type="match status" value="1"/>
</dbReference>
<dbReference type="HAMAP" id="MF_01830">
    <property type="entry name" value="Hydro_lyase"/>
    <property type="match status" value="1"/>
</dbReference>
<dbReference type="InterPro" id="IPR009906">
    <property type="entry name" value="D-Glu_cyclase"/>
</dbReference>
<dbReference type="InterPro" id="IPR038021">
    <property type="entry name" value="Putative_hydro-lyase"/>
</dbReference>
<dbReference type="InterPro" id="IPR016938">
    <property type="entry name" value="UPF0317"/>
</dbReference>
<dbReference type="NCBIfam" id="NF003969">
    <property type="entry name" value="PRK05463.1"/>
    <property type="match status" value="1"/>
</dbReference>
<dbReference type="PANTHER" id="PTHR32022">
    <property type="entry name" value="D-GLUTAMATE CYCLASE, MITOCHONDRIAL"/>
    <property type="match status" value="1"/>
</dbReference>
<dbReference type="PANTHER" id="PTHR32022:SF10">
    <property type="entry name" value="D-GLUTAMATE CYCLASE, MITOCHONDRIAL"/>
    <property type="match status" value="1"/>
</dbReference>
<dbReference type="Pfam" id="PF07286">
    <property type="entry name" value="D-Glu_cyclase"/>
    <property type="match status" value="1"/>
</dbReference>
<dbReference type="PIRSF" id="PIRSF029755">
    <property type="entry name" value="UCP029755"/>
    <property type="match status" value="1"/>
</dbReference>
<dbReference type="SUPFAM" id="SSF160920">
    <property type="entry name" value="PSTPO5379-like"/>
    <property type="match status" value="1"/>
</dbReference>
<reference key="1">
    <citation type="journal article" date="2007" name="Science">
        <title>Legumes symbioses: absence of nod genes in photosynthetic bradyrhizobia.</title>
        <authorList>
            <person name="Giraud E."/>
            <person name="Moulin L."/>
            <person name="Vallenet D."/>
            <person name="Barbe V."/>
            <person name="Cytryn E."/>
            <person name="Avarre J.-C."/>
            <person name="Jaubert M."/>
            <person name="Simon D."/>
            <person name="Cartieaux F."/>
            <person name="Prin Y."/>
            <person name="Bena G."/>
            <person name="Hannibal L."/>
            <person name="Fardoux J."/>
            <person name="Kojadinovic M."/>
            <person name="Vuillet L."/>
            <person name="Lajus A."/>
            <person name="Cruveiller S."/>
            <person name="Rouy Z."/>
            <person name="Mangenot S."/>
            <person name="Segurens B."/>
            <person name="Dossat C."/>
            <person name="Franck W.L."/>
            <person name="Chang W.-S."/>
            <person name="Saunders E."/>
            <person name="Bruce D."/>
            <person name="Richardson P."/>
            <person name="Normand P."/>
            <person name="Dreyfus B."/>
            <person name="Pignol D."/>
            <person name="Stacey G."/>
            <person name="Emerich D."/>
            <person name="Vermeglio A."/>
            <person name="Medigue C."/>
            <person name="Sadowsky M."/>
        </authorList>
    </citation>
    <scope>NUCLEOTIDE SEQUENCE [LARGE SCALE GENOMIC DNA]</scope>
    <source>
        <strain>ORS 278</strain>
    </source>
</reference>
<organism>
    <name type="scientific">Bradyrhizobium sp. (strain ORS 278)</name>
    <dbReference type="NCBI Taxonomy" id="114615"/>
    <lineage>
        <taxon>Bacteria</taxon>
        <taxon>Pseudomonadati</taxon>
        <taxon>Pseudomonadota</taxon>
        <taxon>Alphaproteobacteria</taxon>
        <taxon>Hyphomicrobiales</taxon>
        <taxon>Nitrobacteraceae</taxon>
        <taxon>Bradyrhizobium</taxon>
    </lineage>
</organism>